<reference key="1">
    <citation type="submission" date="2007-03" db="EMBL/GenBank/DDBJ databases">
        <title>Complete sequence of Desulfotomaculum reducens MI-1.</title>
        <authorList>
            <consortium name="US DOE Joint Genome Institute"/>
            <person name="Copeland A."/>
            <person name="Lucas S."/>
            <person name="Lapidus A."/>
            <person name="Barry K."/>
            <person name="Detter J.C."/>
            <person name="Glavina del Rio T."/>
            <person name="Hammon N."/>
            <person name="Israni S."/>
            <person name="Dalin E."/>
            <person name="Tice H."/>
            <person name="Pitluck S."/>
            <person name="Sims D."/>
            <person name="Brettin T."/>
            <person name="Bruce D."/>
            <person name="Han C."/>
            <person name="Tapia R."/>
            <person name="Schmutz J."/>
            <person name="Larimer F."/>
            <person name="Land M."/>
            <person name="Hauser L."/>
            <person name="Kyrpides N."/>
            <person name="Kim E."/>
            <person name="Tebo B.M."/>
            <person name="Richardson P."/>
        </authorList>
    </citation>
    <scope>NUCLEOTIDE SEQUENCE [LARGE SCALE GENOMIC DNA]</scope>
    <source>
        <strain>ATCC BAA-1160 / DSM 100696 / MI-1</strain>
    </source>
</reference>
<keyword id="KW-0131">Cell cycle</keyword>
<keyword id="KW-0132">Cell division</keyword>
<keyword id="KW-0963">Cytoplasm</keyword>
<keyword id="KW-1185">Reference proteome</keyword>
<keyword id="KW-0717">Septation</keyword>
<feature type="chain" id="PRO_0000334006" description="Cell division protein SepF 1">
    <location>
        <begin position="1"/>
        <end position="147"/>
    </location>
</feature>
<dbReference type="EMBL" id="CP000612">
    <property type="protein sequence ID" value="ABO49252.1"/>
    <property type="molecule type" value="Genomic_DNA"/>
</dbReference>
<dbReference type="RefSeq" id="WP_011877088.1">
    <property type="nucleotide sequence ID" value="NC_009253.1"/>
</dbReference>
<dbReference type="SMR" id="A4J2E9"/>
<dbReference type="STRING" id="349161.Dred_0713"/>
<dbReference type="KEGG" id="drm:Dred_0713"/>
<dbReference type="eggNOG" id="COG1799">
    <property type="taxonomic scope" value="Bacteria"/>
</dbReference>
<dbReference type="HOGENOM" id="CLU_078499_4_1_9"/>
<dbReference type="OrthoDB" id="9815206at2"/>
<dbReference type="Proteomes" id="UP000001556">
    <property type="component" value="Chromosome"/>
</dbReference>
<dbReference type="GO" id="GO:0005737">
    <property type="term" value="C:cytoplasm"/>
    <property type="evidence" value="ECO:0007669"/>
    <property type="project" value="UniProtKB-SubCell"/>
</dbReference>
<dbReference type="GO" id="GO:0000917">
    <property type="term" value="P:division septum assembly"/>
    <property type="evidence" value="ECO:0007669"/>
    <property type="project" value="UniProtKB-KW"/>
</dbReference>
<dbReference type="GO" id="GO:0043093">
    <property type="term" value="P:FtsZ-dependent cytokinesis"/>
    <property type="evidence" value="ECO:0007669"/>
    <property type="project" value="UniProtKB-UniRule"/>
</dbReference>
<dbReference type="Gene3D" id="3.30.110.150">
    <property type="entry name" value="SepF-like protein"/>
    <property type="match status" value="1"/>
</dbReference>
<dbReference type="HAMAP" id="MF_01197">
    <property type="entry name" value="SepF"/>
    <property type="match status" value="1"/>
</dbReference>
<dbReference type="InterPro" id="IPR023052">
    <property type="entry name" value="Cell_div_SepF"/>
</dbReference>
<dbReference type="InterPro" id="IPR007561">
    <property type="entry name" value="Cell_div_SepF/SepF-rel"/>
</dbReference>
<dbReference type="InterPro" id="IPR038594">
    <property type="entry name" value="SepF-like_sf"/>
</dbReference>
<dbReference type="PANTHER" id="PTHR35798">
    <property type="entry name" value="CELL DIVISION PROTEIN SEPF"/>
    <property type="match status" value="1"/>
</dbReference>
<dbReference type="PANTHER" id="PTHR35798:SF1">
    <property type="entry name" value="CELL DIVISION PROTEIN SEPF"/>
    <property type="match status" value="1"/>
</dbReference>
<dbReference type="Pfam" id="PF04472">
    <property type="entry name" value="SepF"/>
    <property type="match status" value="1"/>
</dbReference>
<gene>
    <name evidence="1" type="primary">sepF1</name>
    <name type="ordered locus">Dred_0713</name>
</gene>
<accession>A4J2E9</accession>
<proteinExistence type="inferred from homology"/>
<protein>
    <recommendedName>
        <fullName evidence="1">Cell division protein SepF 1</fullName>
    </recommendedName>
</protein>
<comment type="function">
    <text evidence="1">Cell division protein that is part of the divisome complex and is recruited early to the Z-ring. Probably stimulates Z-ring formation, perhaps through the cross-linking of FtsZ protofilaments. Its function overlaps with FtsA.</text>
</comment>
<comment type="subunit">
    <text evidence="1">Homodimer. Interacts with FtsZ.</text>
</comment>
<comment type="subcellular location">
    <subcellularLocation>
        <location evidence="1">Cytoplasm</location>
    </subcellularLocation>
    <text evidence="1">Localizes to the division site, in a FtsZ-dependent manner.</text>
</comment>
<comment type="similarity">
    <text evidence="1">Belongs to the SepF family.</text>
</comment>
<sequence length="147" mass="16400">MAMGMFDKILGFIGFDETEEQQVDREREAVEKTETLQQIKRKNAQVVSIHSGRQLRVVVCDPASFDEAQNIADNLKNRRAVVVNLEKAGAEQARRIVDFISGATAALNGDMQKVGQNIFLFVPSNIDIANDTARETKEKSIFAWAKS</sequence>
<name>SEPF1_DESRM</name>
<organism>
    <name type="scientific">Desulforamulus reducens (strain ATCC BAA-1160 / DSM 100696 / MI-1)</name>
    <name type="common">Desulfotomaculum reducens</name>
    <dbReference type="NCBI Taxonomy" id="349161"/>
    <lineage>
        <taxon>Bacteria</taxon>
        <taxon>Bacillati</taxon>
        <taxon>Bacillota</taxon>
        <taxon>Clostridia</taxon>
        <taxon>Eubacteriales</taxon>
        <taxon>Peptococcaceae</taxon>
        <taxon>Desulforamulus</taxon>
    </lineage>
</organism>
<evidence type="ECO:0000255" key="1">
    <source>
        <dbReference type="HAMAP-Rule" id="MF_01197"/>
    </source>
</evidence>